<organism>
    <name type="scientific">Bacillus anthracis</name>
    <dbReference type="NCBI Taxonomy" id="1392"/>
    <lineage>
        <taxon>Bacteria</taxon>
        <taxon>Bacillati</taxon>
        <taxon>Bacillota</taxon>
        <taxon>Bacilli</taxon>
        <taxon>Bacillales</taxon>
        <taxon>Bacillaceae</taxon>
        <taxon>Bacillus</taxon>
        <taxon>Bacillus cereus group</taxon>
    </lineage>
</organism>
<accession>Q81WJ5</accession>
<accession>Q6HUP4</accession>
<accession>Q6KNX7</accession>
<dbReference type="EMBL" id="AE016879">
    <property type="protein sequence ID" value="AAP27708.1"/>
    <property type="molecule type" value="Genomic_DNA"/>
</dbReference>
<dbReference type="EMBL" id="AE017334">
    <property type="protein sequence ID" value="AAT33094.1"/>
    <property type="molecule type" value="Genomic_DNA"/>
</dbReference>
<dbReference type="EMBL" id="AE017225">
    <property type="protein sequence ID" value="AAT55995.1"/>
    <property type="molecule type" value="Genomic_DNA"/>
</dbReference>
<dbReference type="RefSeq" id="NP_846222.1">
    <property type="nucleotide sequence ID" value="NC_003997.3"/>
</dbReference>
<dbReference type="RefSeq" id="WP_000170269.1">
    <property type="nucleotide sequence ID" value="NZ_WXXJ01000026.1"/>
</dbReference>
<dbReference type="SMR" id="Q81WJ5"/>
<dbReference type="STRING" id="261594.GBAA_3980"/>
<dbReference type="DNASU" id="1087540"/>
<dbReference type="GeneID" id="45023670"/>
<dbReference type="KEGG" id="ban:BA_3980"/>
<dbReference type="KEGG" id="bar:GBAA_3980"/>
<dbReference type="KEGG" id="bat:BAS3693"/>
<dbReference type="PATRIC" id="fig|198094.11.peg.3950"/>
<dbReference type="eggNOG" id="COG0806">
    <property type="taxonomic scope" value="Bacteria"/>
</dbReference>
<dbReference type="HOGENOM" id="CLU_077636_3_1_9"/>
<dbReference type="OMA" id="IKVDWDP"/>
<dbReference type="OrthoDB" id="9810331at2"/>
<dbReference type="Proteomes" id="UP000000427">
    <property type="component" value="Chromosome"/>
</dbReference>
<dbReference type="Proteomes" id="UP000000594">
    <property type="component" value="Chromosome"/>
</dbReference>
<dbReference type="GO" id="GO:0005737">
    <property type="term" value="C:cytoplasm"/>
    <property type="evidence" value="ECO:0007669"/>
    <property type="project" value="UniProtKB-SubCell"/>
</dbReference>
<dbReference type="GO" id="GO:0005840">
    <property type="term" value="C:ribosome"/>
    <property type="evidence" value="ECO:0007669"/>
    <property type="project" value="InterPro"/>
</dbReference>
<dbReference type="GO" id="GO:0043022">
    <property type="term" value="F:ribosome binding"/>
    <property type="evidence" value="ECO:0007669"/>
    <property type="project" value="InterPro"/>
</dbReference>
<dbReference type="GO" id="GO:0042274">
    <property type="term" value="P:ribosomal small subunit biogenesis"/>
    <property type="evidence" value="ECO:0007669"/>
    <property type="project" value="UniProtKB-UniRule"/>
</dbReference>
<dbReference type="GO" id="GO:0006364">
    <property type="term" value="P:rRNA processing"/>
    <property type="evidence" value="ECO:0007669"/>
    <property type="project" value="UniProtKB-UniRule"/>
</dbReference>
<dbReference type="Gene3D" id="2.30.30.240">
    <property type="entry name" value="PRC-barrel domain"/>
    <property type="match status" value="1"/>
</dbReference>
<dbReference type="Gene3D" id="2.40.30.60">
    <property type="entry name" value="RimM"/>
    <property type="match status" value="1"/>
</dbReference>
<dbReference type="HAMAP" id="MF_00014">
    <property type="entry name" value="Ribosome_mat_RimM"/>
    <property type="match status" value="1"/>
</dbReference>
<dbReference type="InterPro" id="IPR027275">
    <property type="entry name" value="PRC-brl_dom"/>
</dbReference>
<dbReference type="InterPro" id="IPR011033">
    <property type="entry name" value="PRC_barrel-like_sf"/>
</dbReference>
<dbReference type="InterPro" id="IPR011961">
    <property type="entry name" value="RimM"/>
</dbReference>
<dbReference type="InterPro" id="IPR002676">
    <property type="entry name" value="RimM_N"/>
</dbReference>
<dbReference type="InterPro" id="IPR036976">
    <property type="entry name" value="RimM_N_sf"/>
</dbReference>
<dbReference type="InterPro" id="IPR009000">
    <property type="entry name" value="Transl_B-barrel_sf"/>
</dbReference>
<dbReference type="NCBIfam" id="TIGR02273">
    <property type="entry name" value="16S_RimM"/>
    <property type="match status" value="1"/>
</dbReference>
<dbReference type="PANTHER" id="PTHR33692">
    <property type="entry name" value="RIBOSOME MATURATION FACTOR RIMM"/>
    <property type="match status" value="1"/>
</dbReference>
<dbReference type="PANTHER" id="PTHR33692:SF1">
    <property type="entry name" value="RIBOSOME MATURATION FACTOR RIMM"/>
    <property type="match status" value="1"/>
</dbReference>
<dbReference type="Pfam" id="PF05239">
    <property type="entry name" value="PRC"/>
    <property type="match status" value="1"/>
</dbReference>
<dbReference type="Pfam" id="PF01782">
    <property type="entry name" value="RimM"/>
    <property type="match status" value="1"/>
</dbReference>
<dbReference type="SUPFAM" id="SSF50346">
    <property type="entry name" value="PRC-barrel domain"/>
    <property type="match status" value="1"/>
</dbReference>
<dbReference type="SUPFAM" id="SSF50447">
    <property type="entry name" value="Translation proteins"/>
    <property type="match status" value="1"/>
</dbReference>
<protein>
    <recommendedName>
        <fullName evidence="1">Ribosome maturation factor RimM</fullName>
    </recommendedName>
</protein>
<gene>
    <name evidence="1" type="primary">rimM</name>
    <name type="ordered locus">BA_3980</name>
    <name type="ordered locus">GBAA_3980</name>
    <name type="ordered locus">BAS3693</name>
</gene>
<evidence type="ECO:0000255" key="1">
    <source>
        <dbReference type="HAMAP-Rule" id="MF_00014"/>
    </source>
</evidence>
<evidence type="ECO:0000305" key="2"/>
<keyword id="KW-0143">Chaperone</keyword>
<keyword id="KW-0963">Cytoplasm</keyword>
<keyword id="KW-1185">Reference proteome</keyword>
<keyword id="KW-0690">Ribosome biogenesis</keyword>
<keyword id="KW-0698">rRNA processing</keyword>
<name>RIMM_BACAN</name>
<proteinExistence type="inferred from homology"/>
<sequence length="171" mass="19272">MTKWFNVGKIVNTHGVKGEIRVVSRTDFPEERYKVGNTLYISNEKGGEPFPVKITSHRQHKTFDLLTFEGYGNVNEVEQFKGSLLKVPEDQLGELAEGEYYYHEIIGCNVVTEEGEALGTIKEVLSPGANDVWVIKRPKGQDLLIPYIDDVVLQVNIENKLVTIHVTEGLL</sequence>
<feature type="chain" id="PRO_0000163245" description="Ribosome maturation factor RimM">
    <location>
        <begin position="1"/>
        <end position="171"/>
    </location>
</feature>
<feature type="domain" description="PRC barrel" evidence="1">
    <location>
        <begin position="97"/>
        <end position="170"/>
    </location>
</feature>
<feature type="sequence conflict" description="In Ref. 3; AAT55995." evidence="2" ref="3">
    <original>T</original>
    <variation>M</variation>
    <location>
        <position position="167"/>
    </location>
</feature>
<reference key="1">
    <citation type="journal article" date="2003" name="Nature">
        <title>The genome sequence of Bacillus anthracis Ames and comparison to closely related bacteria.</title>
        <authorList>
            <person name="Read T.D."/>
            <person name="Peterson S.N."/>
            <person name="Tourasse N.J."/>
            <person name="Baillie L.W."/>
            <person name="Paulsen I.T."/>
            <person name="Nelson K.E."/>
            <person name="Tettelin H."/>
            <person name="Fouts D.E."/>
            <person name="Eisen J.A."/>
            <person name="Gill S.R."/>
            <person name="Holtzapple E.K."/>
            <person name="Okstad O.A."/>
            <person name="Helgason E."/>
            <person name="Rilstone J."/>
            <person name="Wu M."/>
            <person name="Kolonay J.F."/>
            <person name="Beanan M.J."/>
            <person name="Dodson R.J."/>
            <person name="Brinkac L.M."/>
            <person name="Gwinn M.L."/>
            <person name="DeBoy R.T."/>
            <person name="Madpu R."/>
            <person name="Daugherty S.C."/>
            <person name="Durkin A.S."/>
            <person name="Haft D.H."/>
            <person name="Nelson W.C."/>
            <person name="Peterson J.D."/>
            <person name="Pop M."/>
            <person name="Khouri H.M."/>
            <person name="Radune D."/>
            <person name="Benton J.L."/>
            <person name="Mahamoud Y."/>
            <person name="Jiang L."/>
            <person name="Hance I.R."/>
            <person name="Weidman J.F."/>
            <person name="Berry K.J."/>
            <person name="Plaut R.D."/>
            <person name="Wolf A.M."/>
            <person name="Watkins K.L."/>
            <person name="Nierman W.C."/>
            <person name="Hazen A."/>
            <person name="Cline R.T."/>
            <person name="Redmond C."/>
            <person name="Thwaite J.E."/>
            <person name="White O."/>
            <person name="Salzberg S.L."/>
            <person name="Thomason B."/>
            <person name="Friedlander A.M."/>
            <person name="Koehler T.M."/>
            <person name="Hanna P.C."/>
            <person name="Kolstoe A.-B."/>
            <person name="Fraser C.M."/>
        </authorList>
    </citation>
    <scope>NUCLEOTIDE SEQUENCE [LARGE SCALE GENOMIC DNA]</scope>
    <source>
        <strain>Ames / isolate Porton</strain>
    </source>
</reference>
<reference key="2">
    <citation type="journal article" date="2009" name="J. Bacteriol.">
        <title>The complete genome sequence of Bacillus anthracis Ames 'Ancestor'.</title>
        <authorList>
            <person name="Ravel J."/>
            <person name="Jiang L."/>
            <person name="Stanley S.T."/>
            <person name="Wilson M.R."/>
            <person name="Decker R.S."/>
            <person name="Read T.D."/>
            <person name="Worsham P."/>
            <person name="Keim P.S."/>
            <person name="Salzberg S.L."/>
            <person name="Fraser-Liggett C.M."/>
            <person name="Rasko D.A."/>
        </authorList>
    </citation>
    <scope>NUCLEOTIDE SEQUENCE [LARGE SCALE GENOMIC DNA]</scope>
    <source>
        <strain>Ames ancestor</strain>
    </source>
</reference>
<reference key="3">
    <citation type="submission" date="2004-01" db="EMBL/GenBank/DDBJ databases">
        <title>Complete genome sequence of Bacillus anthracis Sterne.</title>
        <authorList>
            <person name="Brettin T.S."/>
            <person name="Bruce D."/>
            <person name="Challacombe J.F."/>
            <person name="Gilna P."/>
            <person name="Han C."/>
            <person name="Hill K."/>
            <person name="Hitchcock P."/>
            <person name="Jackson P."/>
            <person name="Keim P."/>
            <person name="Longmire J."/>
            <person name="Lucas S."/>
            <person name="Okinaka R."/>
            <person name="Richardson P."/>
            <person name="Rubin E."/>
            <person name="Tice H."/>
        </authorList>
    </citation>
    <scope>NUCLEOTIDE SEQUENCE [LARGE SCALE GENOMIC DNA]</scope>
    <source>
        <strain>Sterne</strain>
    </source>
</reference>
<comment type="function">
    <text evidence="1">An accessory protein needed during the final step in the assembly of 30S ribosomal subunit, possibly for assembly of the head region. Essential for efficient processing of 16S rRNA. May be needed both before and after RbfA during the maturation of 16S rRNA. It has affinity for free ribosomal 30S subunits but not for 70S ribosomes.</text>
</comment>
<comment type="subunit">
    <text evidence="1">Binds ribosomal protein uS19.</text>
</comment>
<comment type="subcellular location">
    <subcellularLocation>
        <location evidence="1">Cytoplasm</location>
    </subcellularLocation>
</comment>
<comment type="domain">
    <text evidence="1">The PRC barrel domain binds ribosomal protein uS19.</text>
</comment>
<comment type="similarity">
    <text evidence="1">Belongs to the RimM family.</text>
</comment>